<accession>Q8BH79</accession>
<accession>Q4FZD2</accession>
<accession>Q8BMS8</accession>
<accession>Q8BV74</accession>
<accession>Q8BW67</accession>
<accession>Q8R0U0</accession>
<accession>Q99LP0</accession>
<sequence>MRVTLSTLDTCESSFTPLVVIELAQDVKDETKEWLKNRIIAKKKDGGAQLLFRPLLNKYEKETLENQNLYLVGASNVRLLLGAEAVGLVKECTDAAMRAFTYGTRHNFKGFHDNNNDFLTMAECQFIIKHELENLRARDEKMIPGYPQAKLYPGKSLMRRLLTSGIVTQVFPLHDTEALKKLEDTWYTRFALKYQPIDSIRSYFGETIALYFGFLEYFTFALIPMAIIGLPYYLFVWEDYDKYVIFASFNLIWSTVILEVWKRGCANMTYRWGTLVMKRQFEEPRPGFHGVLGINSVTGREEPLYSSYKRQLRIYLVSLPFVCLCLYFSLYVMMIYFDMEDWALSLHEDSGSEWTSLLLYVPSIVYAVVIEIMNRLYRYAAEFLTSWENHRLESAYQNHLVLKVLVFNFLNCFASLFYIAFVLKDMKLLRQSLATLLITSQILNQVVESLLPYWLQRKYCARVKRKVQALKSEVDTTLYEQVLLEKEMGTYLGTFDDYLELFLQFGYVSLFSCVYPLAAAFAVLNNFTEVNSDALKMCRVFKRPFAEPSASIGVWQLAFETMSVISVVTNCALIGMSPQVNAVFPESKTDLVLIVVAVEHALLALKFILAFAIPDKPRHIQQKLARLEFESLEALKQQQMKLVAENLKEEYQEDGKEAT</sequence>
<dbReference type="EMBL" id="AK028391">
    <property type="protein sequence ID" value="BAC25927.1"/>
    <property type="status" value="ALT_SEQ"/>
    <property type="molecule type" value="mRNA"/>
</dbReference>
<dbReference type="EMBL" id="AK046091">
    <property type="protein sequence ID" value="BAC32601.1"/>
    <property type="molecule type" value="mRNA"/>
</dbReference>
<dbReference type="EMBL" id="AK054163">
    <property type="protein sequence ID" value="BAC35676.1"/>
    <property type="molecule type" value="mRNA"/>
</dbReference>
<dbReference type="EMBL" id="AK079622">
    <property type="protein sequence ID" value="BAC37706.1"/>
    <property type="status" value="ALT_INIT"/>
    <property type="molecule type" value="mRNA"/>
</dbReference>
<dbReference type="EMBL" id="AK080947">
    <property type="protein sequence ID" value="BAC38086.1"/>
    <property type="molecule type" value="mRNA"/>
</dbReference>
<dbReference type="EMBL" id="BC002294">
    <property type="protein sequence ID" value="AAH02294.1"/>
    <property type="molecule type" value="mRNA"/>
</dbReference>
<dbReference type="EMBL" id="BC026421">
    <property type="protein sequence ID" value="AAH26421.1"/>
    <property type="status" value="ALT_SEQ"/>
    <property type="molecule type" value="mRNA"/>
</dbReference>
<dbReference type="EMBL" id="BC099688">
    <property type="protein sequence ID" value="AAH99688.1"/>
    <property type="molecule type" value="mRNA"/>
</dbReference>
<dbReference type="CCDS" id="CCDS23645.1">
    <molecule id="Q8BH79-1"/>
</dbReference>
<dbReference type="CCDS" id="CCDS90687.1">
    <molecule id="Q8BH79-2"/>
</dbReference>
<dbReference type="RefSeq" id="NP_001258802.1">
    <molecule id="Q8BH79-2"/>
    <property type="nucleotide sequence ID" value="NM_001271873.2"/>
</dbReference>
<dbReference type="RefSeq" id="NP_001408476.1">
    <molecule id="Q8BH79-4"/>
    <property type="nucleotide sequence ID" value="NM_001421547.1"/>
</dbReference>
<dbReference type="RefSeq" id="NP_598740.1">
    <molecule id="Q8BH79-1"/>
    <property type="nucleotide sequence ID" value="NM_133979.4"/>
</dbReference>
<dbReference type="RefSeq" id="XP_011241230.1">
    <property type="nucleotide sequence ID" value="XM_011242928.2"/>
</dbReference>
<dbReference type="SMR" id="Q8BH79"/>
<dbReference type="BioGRID" id="221897">
    <property type="interactions" value="1"/>
</dbReference>
<dbReference type="FunCoup" id="Q8BH79">
    <property type="interactions" value="1694"/>
</dbReference>
<dbReference type="IntAct" id="Q8BH79">
    <property type="interactions" value="1"/>
</dbReference>
<dbReference type="STRING" id="10090.ENSMUSP00000045214"/>
<dbReference type="GlyGen" id="Q8BH79">
    <property type="glycosylation" value="1 site, 1 N-linked glycan (1 site)"/>
</dbReference>
<dbReference type="PhosphoSitePlus" id="Q8BH79"/>
<dbReference type="SwissPalm" id="Q8BH79"/>
<dbReference type="PaxDb" id="10090-ENSMUSP00000045214"/>
<dbReference type="PeptideAtlas" id="Q8BH79"/>
<dbReference type="ProteomicsDB" id="296305">
    <molecule id="Q8BH79-1"/>
</dbReference>
<dbReference type="ProteomicsDB" id="296306">
    <molecule id="Q8BH79-2"/>
</dbReference>
<dbReference type="ProteomicsDB" id="296307">
    <molecule id="Q8BH79-3"/>
</dbReference>
<dbReference type="ProteomicsDB" id="296308">
    <molecule id="Q8BH79-4"/>
</dbReference>
<dbReference type="Pumba" id="Q8BH79"/>
<dbReference type="Antibodypedia" id="29353">
    <property type="antibodies" value="77 antibodies from 24 providers"/>
</dbReference>
<dbReference type="DNASU" id="102566"/>
<dbReference type="Ensembl" id="ENSMUST00000042546.4">
    <molecule id="Q8BH79-1"/>
    <property type="protein sequence ID" value="ENSMUSP00000045214.3"/>
    <property type="gene ID" value="ENSMUSG00000037949.9"/>
</dbReference>
<dbReference type="Ensembl" id="ENSMUST00000214409.2">
    <molecule id="Q8BH79-2"/>
    <property type="protein sequence ID" value="ENSMUSP00000151189.2"/>
    <property type="gene ID" value="ENSMUSG00000037949.9"/>
</dbReference>
<dbReference type="Ensembl" id="ENSMUST00000216670.2">
    <molecule id="Q8BH79-3"/>
    <property type="protein sequence ID" value="ENSMUSP00000150161.2"/>
    <property type="gene ID" value="ENSMUSG00000037949.9"/>
</dbReference>
<dbReference type="GeneID" id="102566"/>
<dbReference type="KEGG" id="mmu:102566"/>
<dbReference type="UCSC" id="uc009ser.2">
    <molecule id="Q8BH79-1"/>
    <property type="organism name" value="mouse"/>
</dbReference>
<dbReference type="UCSC" id="uc009ses.2">
    <molecule id="Q8BH79-2"/>
    <property type="organism name" value="mouse"/>
</dbReference>
<dbReference type="UCSC" id="uc009seu.1">
    <molecule id="Q8BH79-4"/>
    <property type="organism name" value="mouse"/>
</dbReference>
<dbReference type="AGR" id="MGI:2143103"/>
<dbReference type="CTD" id="55129"/>
<dbReference type="MGI" id="MGI:2143103">
    <property type="gene designation" value="Ano10"/>
</dbReference>
<dbReference type="VEuPathDB" id="HostDB:ENSMUSG00000037949"/>
<dbReference type="eggNOG" id="KOG2513">
    <property type="taxonomic scope" value="Eukaryota"/>
</dbReference>
<dbReference type="GeneTree" id="ENSGT00940000157537"/>
<dbReference type="HOGENOM" id="CLU_006685_2_3_1"/>
<dbReference type="InParanoid" id="Q8BH79"/>
<dbReference type="OMA" id="YENHRTA"/>
<dbReference type="OrthoDB" id="296386at2759"/>
<dbReference type="PhylomeDB" id="Q8BH79"/>
<dbReference type="TreeFam" id="TF314265"/>
<dbReference type="Reactome" id="R-MMU-2672351">
    <property type="pathway name" value="Stimuli-sensing channels"/>
</dbReference>
<dbReference type="BioGRID-ORCS" id="102566">
    <property type="hits" value="0 hits in 76 CRISPR screens"/>
</dbReference>
<dbReference type="ChiTaRS" id="Ano10">
    <property type="organism name" value="mouse"/>
</dbReference>
<dbReference type="PRO" id="PR:Q8BH79"/>
<dbReference type="Proteomes" id="UP000000589">
    <property type="component" value="Chromosome 9"/>
</dbReference>
<dbReference type="RNAct" id="Q8BH79">
    <property type="molecule type" value="protein"/>
</dbReference>
<dbReference type="Bgee" id="ENSMUSG00000037949">
    <property type="expression patterns" value="Expressed in interventricular septum and 216 other cell types or tissues"/>
</dbReference>
<dbReference type="ExpressionAtlas" id="Q8BH79">
    <property type="expression patterns" value="baseline and differential"/>
</dbReference>
<dbReference type="GO" id="GO:0005929">
    <property type="term" value="C:cilium"/>
    <property type="evidence" value="ECO:0007669"/>
    <property type="project" value="Ensembl"/>
</dbReference>
<dbReference type="GO" id="GO:0043231">
    <property type="term" value="C:intracellular membrane-bounded organelle"/>
    <property type="evidence" value="ECO:0007669"/>
    <property type="project" value="Ensembl"/>
</dbReference>
<dbReference type="GO" id="GO:0005886">
    <property type="term" value="C:plasma membrane"/>
    <property type="evidence" value="ECO:0000314"/>
    <property type="project" value="MGI"/>
</dbReference>
<dbReference type="GO" id="GO:0005227">
    <property type="term" value="F:calcium-activated cation channel activity"/>
    <property type="evidence" value="ECO:0007669"/>
    <property type="project" value="Ensembl"/>
</dbReference>
<dbReference type="GO" id="GO:0005229">
    <property type="term" value="F:intracellularly calcium-gated chloride channel activity"/>
    <property type="evidence" value="ECO:0007669"/>
    <property type="project" value="Ensembl"/>
</dbReference>
<dbReference type="InterPro" id="IPR007632">
    <property type="entry name" value="Anoctamin"/>
</dbReference>
<dbReference type="InterPro" id="IPR049452">
    <property type="entry name" value="Anoctamin_TM"/>
</dbReference>
<dbReference type="PANTHER" id="PTHR12308">
    <property type="entry name" value="ANOCTAMIN"/>
    <property type="match status" value="1"/>
</dbReference>
<dbReference type="PANTHER" id="PTHR12308:SF40">
    <property type="entry name" value="ANOCTAMIN-10"/>
    <property type="match status" value="1"/>
</dbReference>
<dbReference type="Pfam" id="PF04547">
    <property type="entry name" value="Anoctamin"/>
    <property type="match status" value="1"/>
</dbReference>
<protein>
    <recommendedName>
        <fullName>Anoctamin-10</fullName>
    </recommendedName>
    <alternativeName>
        <fullName>Transmembrane protein 16K</fullName>
    </alternativeName>
</protein>
<gene>
    <name type="primary">Ano10</name>
    <name type="synonym">Tmem16k</name>
</gene>
<evidence type="ECO:0000250" key="1"/>
<evidence type="ECO:0000255" key="2"/>
<evidence type="ECO:0000269" key="3">
    <source>
    </source>
</evidence>
<evidence type="ECO:0000269" key="4">
    <source>
    </source>
</evidence>
<evidence type="ECO:0000303" key="5">
    <source>
    </source>
</evidence>
<evidence type="ECO:0000303" key="6">
    <source>
    </source>
</evidence>
<evidence type="ECO:0000305" key="7"/>
<reference key="1">
    <citation type="journal article" date="2005" name="Science">
        <title>The transcriptional landscape of the mammalian genome.</title>
        <authorList>
            <person name="Carninci P."/>
            <person name="Kasukawa T."/>
            <person name="Katayama S."/>
            <person name="Gough J."/>
            <person name="Frith M.C."/>
            <person name="Maeda N."/>
            <person name="Oyama R."/>
            <person name="Ravasi T."/>
            <person name="Lenhard B."/>
            <person name="Wells C."/>
            <person name="Kodzius R."/>
            <person name="Shimokawa K."/>
            <person name="Bajic V.B."/>
            <person name="Brenner S.E."/>
            <person name="Batalov S."/>
            <person name="Forrest A.R."/>
            <person name="Zavolan M."/>
            <person name="Davis M.J."/>
            <person name="Wilming L.G."/>
            <person name="Aidinis V."/>
            <person name="Allen J.E."/>
            <person name="Ambesi-Impiombato A."/>
            <person name="Apweiler R."/>
            <person name="Aturaliya R.N."/>
            <person name="Bailey T.L."/>
            <person name="Bansal M."/>
            <person name="Baxter L."/>
            <person name="Beisel K.W."/>
            <person name="Bersano T."/>
            <person name="Bono H."/>
            <person name="Chalk A.M."/>
            <person name="Chiu K.P."/>
            <person name="Choudhary V."/>
            <person name="Christoffels A."/>
            <person name="Clutterbuck D.R."/>
            <person name="Crowe M.L."/>
            <person name="Dalla E."/>
            <person name="Dalrymple B.P."/>
            <person name="de Bono B."/>
            <person name="Della Gatta G."/>
            <person name="di Bernardo D."/>
            <person name="Down T."/>
            <person name="Engstrom P."/>
            <person name="Fagiolini M."/>
            <person name="Faulkner G."/>
            <person name="Fletcher C.F."/>
            <person name="Fukushima T."/>
            <person name="Furuno M."/>
            <person name="Futaki S."/>
            <person name="Gariboldi M."/>
            <person name="Georgii-Hemming P."/>
            <person name="Gingeras T.R."/>
            <person name="Gojobori T."/>
            <person name="Green R.E."/>
            <person name="Gustincich S."/>
            <person name="Harbers M."/>
            <person name="Hayashi Y."/>
            <person name="Hensch T.K."/>
            <person name="Hirokawa N."/>
            <person name="Hill D."/>
            <person name="Huminiecki L."/>
            <person name="Iacono M."/>
            <person name="Ikeo K."/>
            <person name="Iwama A."/>
            <person name="Ishikawa T."/>
            <person name="Jakt M."/>
            <person name="Kanapin A."/>
            <person name="Katoh M."/>
            <person name="Kawasawa Y."/>
            <person name="Kelso J."/>
            <person name="Kitamura H."/>
            <person name="Kitano H."/>
            <person name="Kollias G."/>
            <person name="Krishnan S.P."/>
            <person name="Kruger A."/>
            <person name="Kummerfeld S.K."/>
            <person name="Kurochkin I.V."/>
            <person name="Lareau L.F."/>
            <person name="Lazarevic D."/>
            <person name="Lipovich L."/>
            <person name="Liu J."/>
            <person name="Liuni S."/>
            <person name="McWilliam S."/>
            <person name="Madan Babu M."/>
            <person name="Madera M."/>
            <person name="Marchionni L."/>
            <person name="Matsuda H."/>
            <person name="Matsuzawa S."/>
            <person name="Miki H."/>
            <person name="Mignone F."/>
            <person name="Miyake S."/>
            <person name="Morris K."/>
            <person name="Mottagui-Tabar S."/>
            <person name="Mulder N."/>
            <person name="Nakano N."/>
            <person name="Nakauchi H."/>
            <person name="Ng P."/>
            <person name="Nilsson R."/>
            <person name="Nishiguchi S."/>
            <person name="Nishikawa S."/>
            <person name="Nori F."/>
            <person name="Ohara O."/>
            <person name="Okazaki Y."/>
            <person name="Orlando V."/>
            <person name="Pang K.C."/>
            <person name="Pavan W.J."/>
            <person name="Pavesi G."/>
            <person name="Pesole G."/>
            <person name="Petrovsky N."/>
            <person name="Piazza S."/>
            <person name="Reed J."/>
            <person name="Reid J.F."/>
            <person name="Ring B.Z."/>
            <person name="Ringwald M."/>
            <person name="Rost B."/>
            <person name="Ruan Y."/>
            <person name="Salzberg S.L."/>
            <person name="Sandelin A."/>
            <person name="Schneider C."/>
            <person name="Schoenbach C."/>
            <person name="Sekiguchi K."/>
            <person name="Semple C.A."/>
            <person name="Seno S."/>
            <person name="Sessa L."/>
            <person name="Sheng Y."/>
            <person name="Shibata Y."/>
            <person name="Shimada H."/>
            <person name="Shimada K."/>
            <person name="Silva D."/>
            <person name="Sinclair B."/>
            <person name="Sperling S."/>
            <person name="Stupka E."/>
            <person name="Sugiura K."/>
            <person name="Sultana R."/>
            <person name="Takenaka Y."/>
            <person name="Taki K."/>
            <person name="Tammoja K."/>
            <person name="Tan S.L."/>
            <person name="Tang S."/>
            <person name="Taylor M.S."/>
            <person name="Tegner J."/>
            <person name="Teichmann S.A."/>
            <person name="Ueda H.R."/>
            <person name="van Nimwegen E."/>
            <person name="Verardo R."/>
            <person name="Wei C.L."/>
            <person name="Yagi K."/>
            <person name="Yamanishi H."/>
            <person name="Zabarovsky E."/>
            <person name="Zhu S."/>
            <person name="Zimmer A."/>
            <person name="Hide W."/>
            <person name="Bult C."/>
            <person name="Grimmond S.M."/>
            <person name="Teasdale R.D."/>
            <person name="Liu E.T."/>
            <person name="Brusic V."/>
            <person name="Quackenbush J."/>
            <person name="Wahlestedt C."/>
            <person name="Mattick J.S."/>
            <person name="Hume D.A."/>
            <person name="Kai C."/>
            <person name="Sasaki D."/>
            <person name="Tomaru Y."/>
            <person name="Fukuda S."/>
            <person name="Kanamori-Katayama M."/>
            <person name="Suzuki M."/>
            <person name="Aoki J."/>
            <person name="Arakawa T."/>
            <person name="Iida J."/>
            <person name="Imamura K."/>
            <person name="Itoh M."/>
            <person name="Kato T."/>
            <person name="Kawaji H."/>
            <person name="Kawagashira N."/>
            <person name="Kawashima T."/>
            <person name="Kojima M."/>
            <person name="Kondo S."/>
            <person name="Konno H."/>
            <person name="Nakano K."/>
            <person name="Ninomiya N."/>
            <person name="Nishio T."/>
            <person name="Okada M."/>
            <person name="Plessy C."/>
            <person name="Shibata K."/>
            <person name="Shiraki T."/>
            <person name="Suzuki S."/>
            <person name="Tagami M."/>
            <person name="Waki K."/>
            <person name="Watahiki A."/>
            <person name="Okamura-Oho Y."/>
            <person name="Suzuki H."/>
            <person name="Kawai J."/>
            <person name="Hayashizaki Y."/>
        </authorList>
    </citation>
    <scope>NUCLEOTIDE SEQUENCE [LARGE SCALE MRNA] (ISOFORMS 1 AND 3)</scope>
    <scope>NUCLEOTIDE SEQUENCE [LARGE SCALE MRNA] OF 193-659 (ISOFORM 4)</scope>
    <source>
        <strain>C57BL/6J</strain>
        <strain>Czech II</strain>
        <tissue>Adipose tissue</tissue>
        <tissue>Corpora quadrigemina</tissue>
        <tissue>Oviduct</tissue>
        <tissue>Spinal cord</tissue>
    </source>
</reference>
<reference key="2">
    <citation type="journal article" date="2004" name="Genome Res.">
        <title>The status, quality, and expansion of the NIH full-length cDNA project: the Mammalian Gene Collection (MGC).</title>
        <authorList>
            <consortium name="The MGC Project Team"/>
        </authorList>
    </citation>
    <scope>NUCLEOTIDE SEQUENCE [LARGE SCALE MRNA] (ISOFORM 2)</scope>
    <source>
        <strain>FVB/N</strain>
        <tissue>Kidney</tissue>
        <tissue>Mammary tumor</tissue>
        <tissue>Olfactory epithelium</tissue>
    </source>
</reference>
<reference key="3">
    <citation type="journal article" date="2008" name="Dev. Dyn.">
        <title>Expression of TMEM16 paralogs during murine embryogenesis.</title>
        <authorList>
            <person name="Rock J.R."/>
            <person name="Harfe B.D."/>
        </authorList>
    </citation>
    <scope>DEVELOPMENTAL STAGE</scope>
</reference>
<reference key="4">
    <citation type="journal article" date="2010" name="Cell">
        <title>A tissue-specific atlas of mouse protein phosphorylation and expression.</title>
        <authorList>
            <person name="Huttlin E.L."/>
            <person name="Jedrychowski M.P."/>
            <person name="Elias J.E."/>
            <person name="Goswami T."/>
            <person name="Rad R."/>
            <person name="Beausoleil S.A."/>
            <person name="Villen J."/>
            <person name="Haas W."/>
            <person name="Sowa M.E."/>
            <person name="Gygi S.P."/>
        </authorList>
    </citation>
    <scope>IDENTIFICATION BY MASS SPECTROMETRY [LARGE SCALE ANALYSIS]</scope>
    <source>
        <tissue>Testis</tissue>
    </source>
</reference>
<reference key="5">
    <citation type="journal article" date="2010" name="J. Biol. Chem.">
        <title>Expression and function of epithelial anoctamins.</title>
        <authorList>
            <person name="Schreiber R."/>
            <person name="Uliyakina I."/>
            <person name="Kongsuphol P."/>
            <person name="Warth R."/>
            <person name="Mirza M."/>
            <person name="Martins J.R."/>
            <person name="Kunzelmann K."/>
        </authorList>
    </citation>
    <scope>TISSUE SPECIFICITY</scope>
</reference>
<reference key="6">
    <citation type="journal article" date="2012" name="Exp. Physiol.">
        <title>The anoctamin (TMEM16) gene family: calcium-activated chloride channels come of age.</title>
        <authorList>
            <person name="Winpenny J.P."/>
            <person name="Gray M.A."/>
        </authorList>
    </citation>
    <scope>REVIEW</scope>
</reference>
<keyword id="KW-0025">Alternative splicing</keyword>
<keyword id="KW-1003">Cell membrane</keyword>
<keyword id="KW-0472">Membrane</keyword>
<keyword id="KW-1185">Reference proteome</keyword>
<keyword id="KW-0812">Transmembrane</keyword>
<keyword id="KW-1133">Transmembrane helix</keyword>
<proteinExistence type="evidence at protein level"/>
<feature type="chain" id="PRO_0000289958" description="Anoctamin-10">
    <location>
        <begin position="1"/>
        <end position="659"/>
    </location>
</feature>
<feature type="topological domain" description="Cytoplasmic" evidence="2">
    <location>
        <begin position="1"/>
        <end position="207"/>
    </location>
</feature>
<feature type="transmembrane region" description="Helical" evidence="2">
    <location>
        <begin position="208"/>
        <end position="228"/>
    </location>
</feature>
<feature type="topological domain" description="Extracellular" evidence="2">
    <location>
        <begin position="229"/>
        <end position="240"/>
    </location>
</feature>
<feature type="transmembrane region" description="Helical" evidence="2">
    <location>
        <begin position="241"/>
        <end position="261"/>
    </location>
</feature>
<feature type="topological domain" description="Cytoplasmic" evidence="2">
    <location>
        <begin position="262"/>
        <end position="316"/>
    </location>
</feature>
<feature type="transmembrane region" description="Helical" evidence="2">
    <location>
        <begin position="317"/>
        <end position="337"/>
    </location>
</feature>
<feature type="topological domain" description="Extracellular" evidence="2">
    <location>
        <begin position="338"/>
        <end position="352"/>
    </location>
</feature>
<feature type="transmembrane region" description="Helical" evidence="2">
    <location>
        <begin position="353"/>
        <end position="373"/>
    </location>
</feature>
<feature type="topological domain" description="Cytoplasmic" evidence="2">
    <location>
        <begin position="374"/>
        <end position="400"/>
    </location>
</feature>
<feature type="transmembrane region" description="Helical" evidence="2">
    <location>
        <begin position="401"/>
        <end position="421"/>
    </location>
</feature>
<feature type="topological domain" description="Extracellular" evidence="2">
    <location>
        <begin position="422"/>
        <end position="500"/>
    </location>
</feature>
<feature type="transmembrane region" description="Helical" evidence="2">
    <location>
        <begin position="501"/>
        <end position="521"/>
    </location>
</feature>
<feature type="topological domain" description="Cytoplasmic" evidence="2">
    <location>
        <begin position="522"/>
        <end position="553"/>
    </location>
</feature>
<feature type="transmembrane region" description="Helical" evidence="2">
    <location>
        <begin position="554"/>
        <end position="574"/>
    </location>
</feature>
<feature type="topological domain" description="Extracellular" evidence="2">
    <location>
        <begin position="575"/>
        <end position="590"/>
    </location>
</feature>
<feature type="transmembrane region" description="Helical" evidence="2">
    <location>
        <begin position="591"/>
        <end position="611"/>
    </location>
</feature>
<feature type="topological domain" description="Cytoplasmic" evidence="2">
    <location>
        <begin position="612"/>
        <end position="659"/>
    </location>
</feature>
<feature type="splice variant" id="VSP_026034" description="In isoform 2." evidence="5">
    <location>
        <begin position="198"/>
        <end position="255"/>
    </location>
</feature>
<feature type="splice variant" id="VSP_026035" description="In isoform 3." evidence="6">
    <original>HALLALKFILAFA</original>
    <variation>VLGLQASFTIGFY</variation>
    <location>
        <begin position="600"/>
        <end position="612"/>
    </location>
</feature>
<feature type="splice variant" id="VSP_026036" description="In isoform 3." evidence="6">
    <location>
        <begin position="613"/>
        <end position="659"/>
    </location>
</feature>
<feature type="splice variant" id="VSP_026037" description="In isoform 4." evidence="6">
    <original>QMKLVAENLKEEYQEDGKEAT</original>
    <variation>VRAVCLETLLDYIPLAQAPSHCVSFSMDLSVK</variation>
    <location>
        <begin position="639"/>
        <end position="659"/>
    </location>
</feature>
<name>ANO10_MOUSE</name>
<organism>
    <name type="scientific">Mus musculus</name>
    <name type="common">Mouse</name>
    <dbReference type="NCBI Taxonomy" id="10090"/>
    <lineage>
        <taxon>Eukaryota</taxon>
        <taxon>Metazoa</taxon>
        <taxon>Chordata</taxon>
        <taxon>Craniata</taxon>
        <taxon>Vertebrata</taxon>
        <taxon>Euteleostomi</taxon>
        <taxon>Mammalia</taxon>
        <taxon>Eutheria</taxon>
        <taxon>Euarchontoglires</taxon>
        <taxon>Glires</taxon>
        <taxon>Rodentia</taxon>
        <taxon>Myomorpha</taxon>
        <taxon>Muroidea</taxon>
        <taxon>Muridae</taxon>
        <taxon>Murinae</taxon>
        <taxon>Mus</taxon>
        <taxon>Mus</taxon>
    </lineage>
</organism>
<comment type="function">
    <text evidence="1">Does not exhibit calcium-activated chloride channel (CaCC) activity. Can inhibit the activity of ANO1 (By similarity).</text>
</comment>
<comment type="subcellular location">
    <subcellularLocation>
        <location evidence="1">Cell membrane</location>
        <topology evidence="1">Multi-pass membrane protein</topology>
    </subcellularLocation>
    <text evidence="1">Shows predominantly an intracellular localization with a weak expression in the cell membrane.</text>
</comment>
<comment type="alternative products">
    <event type="alternative splicing"/>
    <isoform>
        <id>Q8BH79-1</id>
        <name>1</name>
        <sequence type="displayed"/>
    </isoform>
    <isoform>
        <id>Q8BH79-2</id>
        <name>2</name>
        <sequence type="described" ref="VSP_026034"/>
    </isoform>
    <isoform>
        <id>Q8BH79-3</id>
        <name>3</name>
        <sequence type="described" ref="VSP_026035 VSP_026036"/>
    </isoform>
    <isoform>
        <id>Q8BH79-4</id>
        <name>4</name>
        <sequence type="described" ref="VSP_026037"/>
    </isoform>
</comment>
<comment type="tissue specificity">
    <text evidence="4">Predominant expression seen in epithelial tissues.</text>
</comment>
<comment type="developmental stage">
    <text evidence="3">Detected in the mantle layer of the neural tube and in the dorsal root ganglia at 14.5 dpc.</text>
</comment>
<comment type="miscellaneous">
    <text>The term 'anoctamin' was coined because these channels are anion selective and have eight (OCT) transmembrane segments. There is some dissatisfaction in the field with the Ano nomenclature because it is not certain that all the members of this family are anion channels or have the 8-transmembrane topology.</text>
</comment>
<comment type="similarity">
    <text evidence="7">Belongs to the anoctamin family.</text>
</comment>
<comment type="sequence caution" evidence="7">
    <conflict type="miscellaneous discrepancy">
        <sequence resource="EMBL-CDS" id="AAH26421"/>
    </conflict>
    <text>Contaminating sequence.</text>
</comment>
<comment type="sequence caution" evidence="7">
    <conflict type="frameshift">
        <sequence resource="EMBL-CDS" id="BAC25927"/>
    </conflict>
</comment>
<comment type="sequence caution" evidence="7">
    <conflict type="erroneous initiation">
        <sequence resource="EMBL-CDS" id="BAC37706"/>
    </conflict>
    <text>Extended N-terminus.</text>
</comment>